<comment type="function">
    <text evidence="1">Catalyzes the reductive methylation of 2'-deoxyuridine-5'-monophosphate (dUMP) to 2'-deoxythymidine-5'-monophosphate (dTMP) while utilizing 5,10-methylenetetrahydrofolate (mTHF) as the methyl donor and reductant in the reaction, yielding dihydrofolate (DHF) as a by-product. This enzymatic reaction provides an intracellular de novo source of dTMP, an essential precursor for DNA biosynthesis.</text>
</comment>
<comment type="catalytic activity">
    <reaction evidence="1">
        <text>dUMP + (6R)-5,10-methylene-5,6,7,8-tetrahydrofolate = 7,8-dihydrofolate + dTMP</text>
        <dbReference type="Rhea" id="RHEA:12104"/>
        <dbReference type="ChEBI" id="CHEBI:15636"/>
        <dbReference type="ChEBI" id="CHEBI:57451"/>
        <dbReference type="ChEBI" id="CHEBI:63528"/>
        <dbReference type="ChEBI" id="CHEBI:246422"/>
        <dbReference type="EC" id="2.1.1.45"/>
    </reaction>
</comment>
<comment type="pathway">
    <text evidence="1">Pyrimidine metabolism; dTTP biosynthesis.</text>
</comment>
<comment type="subunit">
    <text evidence="1">Homodimer.</text>
</comment>
<comment type="subcellular location">
    <subcellularLocation>
        <location evidence="1">Cytoplasm</location>
    </subcellularLocation>
</comment>
<comment type="similarity">
    <text evidence="1">Belongs to the thymidylate synthase family. Bacterial-type ThyA subfamily.</text>
</comment>
<comment type="sequence caution" evidence="2">
    <conflict type="erroneous initiation">
        <sequence resource="EMBL-CDS" id="ABF37730"/>
    </conflict>
</comment>
<evidence type="ECO:0000255" key="1">
    <source>
        <dbReference type="HAMAP-Rule" id="MF_00008"/>
    </source>
</evidence>
<evidence type="ECO:0000305" key="2"/>
<gene>
    <name evidence="1" type="primary">thyA</name>
    <name type="ordered locus">MGAS10750_Spy0780</name>
</gene>
<feature type="chain" id="PRO_0000321489" description="Thymidylate synthase">
    <location>
        <begin position="1"/>
        <end position="279"/>
    </location>
</feature>
<feature type="active site" description="Nucleophile" evidence="1">
    <location>
        <position position="154"/>
    </location>
</feature>
<feature type="binding site" evidence="1">
    <location>
        <begin position="133"/>
        <end position="134"/>
    </location>
    <ligand>
        <name>dUMP</name>
        <dbReference type="ChEBI" id="CHEBI:246422"/>
        <note>ligand shared between dimeric partners</note>
    </ligand>
</feature>
<feature type="binding site" description="in other chain" evidence="1">
    <location>
        <begin position="178"/>
        <end position="181"/>
    </location>
    <ligand>
        <name>dUMP</name>
        <dbReference type="ChEBI" id="CHEBI:246422"/>
        <note>ligand shared between dimeric partners</note>
    </ligand>
</feature>
<feature type="binding site" evidence="1">
    <location>
        <position position="181"/>
    </location>
    <ligand>
        <name>(6R)-5,10-methylene-5,6,7,8-tetrahydrofolate</name>
        <dbReference type="ChEBI" id="CHEBI:15636"/>
    </ligand>
</feature>
<feature type="binding site" description="in other chain" evidence="1">
    <location>
        <position position="189"/>
    </location>
    <ligand>
        <name>dUMP</name>
        <dbReference type="ChEBI" id="CHEBI:246422"/>
        <note>ligand shared between dimeric partners</note>
    </ligand>
</feature>
<feature type="binding site" description="in other chain" evidence="1">
    <location>
        <begin position="219"/>
        <end position="221"/>
    </location>
    <ligand>
        <name>dUMP</name>
        <dbReference type="ChEBI" id="CHEBI:246422"/>
        <note>ligand shared between dimeric partners</note>
    </ligand>
</feature>
<feature type="binding site" evidence="1">
    <location>
        <position position="278"/>
    </location>
    <ligand>
        <name>(6R)-5,10-methylene-5,6,7,8-tetrahydrofolate</name>
        <dbReference type="ChEBI" id="CHEBI:15636"/>
    </ligand>
</feature>
<name>TYSY_STRPF</name>
<protein>
    <recommendedName>
        <fullName evidence="1">Thymidylate synthase</fullName>
        <shortName evidence="1">TS</shortName>
        <shortName evidence="1">TSase</shortName>
        <ecNumber evidence="1">2.1.1.45</ecNumber>
    </recommendedName>
</protein>
<organism>
    <name type="scientific">Streptococcus pyogenes serotype M4 (strain MGAS10750)</name>
    <dbReference type="NCBI Taxonomy" id="370554"/>
    <lineage>
        <taxon>Bacteria</taxon>
        <taxon>Bacillati</taxon>
        <taxon>Bacillota</taxon>
        <taxon>Bacilli</taxon>
        <taxon>Lactobacillales</taxon>
        <taxon>Streptococcaceae</taxon>
        <taxon>Streptococcus</taxon>
    </lineage>
</organism>
<dbReference type="EC" id="2.1.1.45" evidence="1"/>
<dbReference type="EMBL" id="CP000262">
    <property type="protein sequence ID" value="ABF37730.1"/>
    <property type="status" value="ALT_INIT"/>
    <property type="molecule type" value="Genomic_DNA"/>
</dbReference>
<dbReference type="SMR" id="Q1J744"/>
<dbReference type="KEGG" id="spi:MGAS10750_Spy0780"/>
<dbReference type="HOGENOM" id="CLU_021669_0_0_9"/>
<dbReference type="UniPathway" id="UPA00575"/>
<dbReference type="Proteomes" id="UP000002434">
    <property type="component" value="Chromosome"/>
</dbReference>
<dbReference type="GO" id="GO:0005829">
    <property type="term" value="C:cytosol"/>
    <property type="evidence" value="ECO:0007669"/>
    <property type="project" value="TreeGrafter"/>
</dbReference>
<dbReference type="GO" id="GO:0004799">
    <property type="term" value="F:thymidylate synthase activity"/>
    <property type="evidence" value="ECO:0007669"/>
    <property type="project" value="UniProtKB-UniRule"/>
</dbReference>
<dbReference type="GO" id="GO:0006231">
    <property type="term" value="P:dTMP biosynthetic process"/>
    <property type="evidence" value="ECO:0007669"/>
    <property type="project" value="UniProtKB-UniRule"/>
</dbReference>
<dbReference type="GO" id="GO:0006235">
    <property type="term" value="P:dTTP biosynthetic process"/>
    <property type="evidence" value="ECO:0007669"/>
    <property type="project" value="UniProtKB-UniRule"/>
</dbReference>
<dbReference type="GO" id="GO:0032259">
    <property type="term" value="P:methylation"/>
    <property type="evidence" value="ECO:0007669"/>
    <property type="project" value="UniProtKB-KW"/>
</dbReference>
<dbReference type="CDD" id="cd00351">
    <property type="entry name" value="TS_Pyrimidine_HMase"/>
    <property type="match status" value="1"/>
</dbReference>
<dbReference type="Gene3D" id="3.30.572.10">
    <property type="entry name" value="Thymidylate synthase/dCMP hydroxymethylase domain"/>
    <property type="match status" value="1"/>
</dbReference>
<dbReference type="HAMAP" id="MF_00008">
    <property type="entry name" value="Thymidy_synth_bact"/>
    <property type="match status" value="1"/>
</dbReference>
<dbReference type="InterPro" id="IPR045097">
    <property type="entry name" value="Thymidate_synth/dCMP_Mease"/>
</dbReference>
<dbReference type="InterPro" id="IPR023451">
    <property type="entry name" value="Thymidate_synth/dCMP_Mease_dom"/>
</dbReference>
<dbReference type="InterPro" id="IPR036926">
    <property type="entry name" value="Thymidate_synth/dCMP_Mease_sf"/>
</dbReference>
<dbReference type="InterPro" id="IPR000398">
    <property type="entry name" value="Thymidylate_synthase"/>
</dbReference>
<dbReference type="InterPro" id="IPR020940">
    <property type="entry name" value="Thymidylate_synthase_AS"/>
</dbReference>
<dbReference type="NCBIfam" id="NF002495">
    <property type="entry name" value="PRK01827.1-1"/>
    <property type="match status" value="1"/>
</dbReference>
<dbReference type="PANTHER" id="PTHR11548">
    <property type="entry name" value="THYMIDYLATE SYNTHASE 1"/>
    <property type="match status" value="1"/>
</dbReference>
<dbReference type="PANTHER" id="PTHR11548:SF1">
    <property type="entry name" value="THYMIDYLATE SYNTHASE 1"/>
    <property type="match status" value="1"/>
</dbReference>
<dbReference type="Pfam" id="PF00303">
    <property type="entry name" value="Thymidylat_synt"/>
    <property type="match status" value="1"/>
</dbReference>
<dbReference type="PRINTS" id="PR00108">
    <property type="entry name" value="THYMDSNTHASE"/>
</dbReference>
<dbReference type="SUPFAM" id="SSF55831">
    <property type="entry name" value="Thymidylate synthase/dCMP hydroxymethylase"/>
    <property type="match status" value="1"/>
</dbReference>
<dbReference type="PROSITE" id="PS00091">
    <property type="entry name" value="THYMIDYLATE_SYNTHASE"/>
    <property type="match status" value="1"/>
</dbReference>
<proteinExistence type="inferred from homology"/>
<reference key="1">
    <citation type="journal article" date="2006" name="Proc. Natl. Acad. Sci. U.S.A.">
        <title>Molecular genetic anatomy of inter- and intraserotype variation in the human bacterial pathogen group A Streptococcus.</title>
        <authorList>
            <person name="Beres S.B."/>
            <person name="Richter E.W."/>
            <person name="Nagiec M.J."/>
            <person name="Sumby P."/>
            <person name="Porcella S.F."/>
            <person name="DeLeo F.R."/>
            <person name="Musser J.M."/>
        </authorList>
    </citation>
    <scope>NUCLEOTIDE SEQUENCE [LARGE SCALE GENOMIC DNA]</scope>
    <source>
        <strain>MGAS10750</strain>
    </source>
</reference>
<keyword id="KW-0963">Cytoplasm</keyword>
<keyword id="KW-0489">Methyltransferase</keyword>
<keyword id="KW-0545">Nucleotide biosynthesis</keyword>
<keyword id="KW-0808">Transferase</keyword>
<accession>Q1J744</accession>
<sequence length="279" mass="32564">MTKADQIFKANIQKIINEGSLSEQARPKYKDGRTAHSKYITGAFAEYDLAKGEFPITTLRPIPIKSAIKELFWIYQDQSNSLDVLEAKYNVHYWNEWEVDQTRTIGQRYGAVVKKHDIISKILKQLAENPWNRRNVISLWDYEAFEETKGLLPCAFQIMFDVRRVGEDLYLDASLTQRSNDILVAHHINAMQYVALQMMIAKHFGWKIGKFFYFVNNLHIYDNQFDQAQELLKRQPVASQPKLVLNVPDGTNFFDIKPDDFELQNYDPVKPQLHFDLAI</sequence>